<sequence length="86" mass="9840">MGIFDLLKKKQKPSTAAVAKERLQIIVAHERKKRTEPDYLPMMQQEIIQVIRKYVTIADDQVSVQLDNNDECSVLELNVTLPDSNS</sequence>
<proteinExistence type="inferred from homology"/>
<name>MINE_ALTMD</name>
<accession>B4RWR9</accession>
<accession>F2G2L1</accession>
<comment type="function">
    <text evidence="1">Prevents the cell division inhibition by proteins MinC and MinD at internal division sites while permitting inhibition at polar sites. This ensures cell division at the proper site by restricting the formation of a division septum at the midpoint of the long axis of the cell.</text>
</comment>
<comment type="similarity">
    <text evidence="1">Belongs to the MinE family.</text>
</comment>
<organism>
    <name type="scientific">Alteromonas mediterranea (strain DSM 17117 / CIP 110805 / LMG 28347 / Deep ecotype)</name>
    <dbReference type="NCBI Taxonomy" id="1774373"/>
    <lineage>
        <taxon>Bacteria</taxon>
        <taxon>Pseudomonadati</taxon>
        <taxon>Pseudomonadota</taxon>
        <taxon>Gammaproteobacteria</taxon>
        <taxon>Alteromonadales</taxon>
        <taxon>Alteromonadaceae</taxon>
        <taxon>Alteromonas/Salinimonas group</taxon>
        <taxon>Alteromonas</taxon>
    </lineage>
</organism>
<evidence type="ECO:0000255" key="1">
    <source>
        <dbReference type="HAMAP-Rule" id="MF_00262"/>
    </source>
</evidence>
<keyword id="KW-0131">Cell cycle</keyword>
<keyword id="KW-0132">Cell division</keyword>
<reference key="1">
    <citation type="journal article" date="2008" name="ISME J.">
        <title>Comparative genomics of two ecotypes of the marine planktonic copiotroph Alteromonas macleodii suggests alternative lifestyles associated with different kinds of particulate organic matter.</title>
        <authorList>
            <person name="Ivars-Martinez E."/>
            <person name="Martin-Cuadrado A.-B."/>
            <person name="D'Auria G."/>
            <person name="Mira A."/>
            <person name="Ferriera S."/>
            <person name="Johnson J."/>
            <person name="Friedman R."/>
            <person name="Rodriguez-Valera F."/>
        </authorList>
    </citation>
    <scope>NUCLEOTIDE SEQUENCE [LARGE SCALE GENOMIC DNA]</scope>
    <source>
        <strain>DSM 17117 / CIP 110805 / LMG 28347 / Deep ecotype</strain>
    </source>
</reference>
<protein>
    <recommendedName>
        <fullName evidence="1">Cell division topological specificity factor</fullName>
    </recommendedName>
</protein>
<feature type="chain" id="PRO_1000114200" description="Cell division topological specificity factor">
    <location>
        <begin position="1"/>
        <end position="86"/>
    </location>
</feature>
<dbReference type="EMBL" id="CP001103">
    <property type="protein sequence ID" value="AEA99312.1"/>
    <property type="molecule type" value="Genomic_DNA"/>
</dbReference>
<dbReference type="RefSeq" id="WP_012519604.1">
    <property type="nucleotide sequence ID" value="NC_011138.3"/>
</dbReference>
<dbReference type="SMR" id="B4RWR9"/>
<dbReference type="GeneID" id="56343455"/>
<dbReference type="KEGG" id="amc:MADE_1015910"/>
<dbReference type="HOGENOM" id="CLU_137929_2_1_6"/>
<dbReference type="Proteomes" id="UP000001870">
    <property type="component" value="Chromosome"/>
</dbReference>
<dbReference type="GO" id="GO:0051301">
    <property type="term" value="P:cell division"/>
    <property type="evidence" value="ECO:0007669"/>
    <property type="project" value="UniProtKB-KW"/>
</dbReference>
<dbReference type="GO" id="GO:0032955">
    <property type="term" value="P:regulation of division septum assembly"/>
    <property type="evidence" value="ECO:0007669"/>
    <property type="project" value="InterPro"/>
</dbReference>
<dbReference type="FunFam" id="3.30.1070.10:FF:000001">
    <property type="entry name" value="Cell division topological specificity factor"/>
    <property type="match status" value="1"/>
</dbReference>
<dbReference type="Gene3D" id="3.30.1070.10">
    <property type="entry name" value="Cell division topological specificity factor MinE"/>
    <property type="match status" value="1"/>
</dbReference>
<dbReference type="HAMAP" id="MF_00262">
    <property type="entry name" value="MinE"/>
    <property type="match status" value="1"/>
</dbReference>
<dbReference type="InterPro" id="IPR005527">
    <property type="entry name" value="MinE"/>
</dbReference>
<dbReference type="InterPro" id="IPR036707">
    <property type="entry name" value="MinE_sf"/>
</dbReference>
<dbReference type="NCBIfam" id="TIGR01215">
    <property type="entry name" value="minE"/>
    <property type="match status" value="1"/>
</dbReference>
<dbReference type="NCBIfam" id="NF001422">
    <property type="entry name" value="PRK00296.1"/>
    <property type="match status" value="1"/>
</dbReference>
<dbReference type="Pfam" id="PF03776">
    <property type="entry name" value="MinE"/>
    <property type="match status" value="1"/>
</dbReference>
<dbReference type="SUPFAM" id="SSF55229">
    <property type="entry name" value="Cell division protein MinE topological specificity domain"/>
    <property type="match status" value="1"/>
</dbReference>
<gene>
    <name evidence="1" type="primary">minE</name>
    <name type="ordered locus">MADE_1015910</name>
</gene>